<keyword id="KW-1064">Adaptive immunity</keyword>
<keyword id="KW-0903">Direct protein sequencing</keyword>
<keyword id="KW-1015">Disulfide bond</keyword>
<keyword id="KW-0391">Immunity</keyword>
<keyword id="KW-1280">Immunoglobulin</keyword>
<keyword id="KW-1185">Reference proteome</keyword>
<dbReference type="PIR" id="A01932">
    <property type="entry name" value="KVMS13"/>
</dbReference>
<dbReference type="SMR" id="P01657"/>
<dbReference type="FunCoup" id="P01657">
    <property type="interactions" value="482"/>
</dbReference>
<dbReference type="jPOST" id="P01657"/>
<dbReference type="PeptideAtlas" id="P01657"/>
<dbReference type="InParanoid" id="P01657"/>
<dbReference type="Proteomes" id="UP000000589">
    <property type="component" value="Unplaced"/>
</dbReference>
<dbReference type="RNAct" id="P01657">
    <property type="molecule type" value="protein"/>
</dbReference>
<dbReference type="GO" id="GO:0019814">
    <property type="term" value="C:immunoglobulin complex"/>
    <property type="evidence" value="ECO:0000318"/>
    <property type="project" value="GO_Central"/>
</dbReference>
<dbReference type="GO" id="GO:0002250">
    <property type="term" value="P:adaptive immune response"/>
    <property type="evidence" value="ECO:0007669"/>
    <property type="project" value="UniProtKB-KW"/>
</dbReference>
<dbReference type="GO" id="GO:0006955">
    <property type="term" value="P:immune response"/>
    <property type="evidence" value="ECO:0000318"/>
    <property type="project" value="GO_Central"/>
</dbReference>
<dbReference type="CDD" id="cd04980">
    <property type="entry name" value="IgV_L_kappa"/>
    <property type="match status" value="1"/>
</dbReference>
<dbReference type="FunFam" id="2.60.40.10:FF:000350">
    <property type="entry name" value="Immunoglobulin kappa chain variable 18-36"/>
    <property type="match status" value="1"/>
</dbReference>
<dbReference type="Gene3D" id="2.60.40.10">
    <property type="entry name" value="Immunoglobulins"/>
    <property type="match status" value="1"/>
</dbReference>
<dbReference type="InterPro" id="IPR007110">
    <property type="entry name" value="Ig-like_dom"/>
</dbReference>
<dbReference type="InterPro" id="IPR036179">
    <property type="entry name" value="Ig-like_dom_sf"/>
</dbReference>
<dbReference type="InterPro" id="IPR013783">
    <property type="entry name" value="Ig-like_fold"/>
</dbReference>
<dbReference type="InterPro" id="IPR003599">
    <property type="entry name" value="Ig_sub"/>
</dbReference>
<dbReference type="InterPro" id="IPR013106">
    <property type="entry name" value="Ig_V-set"/>
</dbReference>
<dbReference type="InterPro" id="IPR050150">
    <property type="entry name" value="IgV_Light_Chain"/>
</dbReference>
<dbReference type="PANTHER" id="PTHR23267">
    <property type="entry name" value="IMMUNOGLOBULIN LIGHT CHAIN"/>
    <property type="match status" value="1"/>
</dbReference>
<dbReference type="Pfam" id="PF07686">
    <property type="entry name" value="V-set"/>
    <property type="match status" value="1"/>
</dbReference>
<dbReference type="SMART" id="SM00409">
    <property type="entry name" value="IG"/>
    <property type="match status" value="1"/>
</dbReference>
<dbReference type="SMART" id="SM00406">
    <property type="entry name" value="IGv"/>
    <property type="match status" value="1"/>
</dbReference>
<dbReference type="SUPFAM" id="SSF48726">
    <property type="entry name" value="Immunoglobulin"/>
    <property type="match status" value="1"/>
</dbReference>
<dbReference type="PROSITE" id="PS50835">
    <property type="entry name" value="IG_LIKE"/>
    <property type="match status" value="1"/>
</dbReference>
<organism>
    <name type="scientific">Mus musculus</name>
    <name type="common">Mouse</name>
    <dbReference type="NCBI Taxonomy" id="10090"/>
    <lineage>
        <taxon>Eukaryota</taxon>
        <taxon>Metazoa</taxon>
        <taxon>Chordata</taxon>
        <taxon>Craniata</taxon>
        <taxon>Vertebrata</taxon>
        <taxon>Euteleostomi</taxon>
        <taxon>Mammalia</taxon>
        <taxon>Eutheria</taxon>
        <taxon>Euarchontoglires</taxon>
        <taxon>Glires</taxon>
        <taxon>Rodentia</taxon>
        <taxon>Myomorpha</taxon>
        <taxon>Muroidea</taxon>
        <taxon>Muridae</taxon>
        <taxon>Murinae</taxon>
        <taxon>Mus</taxon>
        <taxon>Mus</taxon>
    </lineage>
</organism>
<name>KV3A5_MOUSE</name>
<proteinExistence type="evidence at protein level"/>
<feature type="chain" id="PRO_0000059781" description="Ig kappa chain V-III region PC 2413">
    <location>
        <begin position="1"/>
        <end position="111" status="greater than"/>
    </location>
</feature>
<feature type="region of interest" description="Framework-1">
    <location>
        <begin position="1"/>
        <end position="23"/>
    </location>
</feature>
<feature type="region of interest" description="Complementarity-determining-1">
    <location>
        <begin position="24"/>
        <end position="38"/>
    </location>
</feature>
<feature type="region of interest" description="Framework-2">
    <location>
        <begin position="39"/>
        <end position="53"/>
    </location>
</feature>
<feature type="region of interest" description="Complementarity-determining-2">
    <location>
        <begin position="54"/>
        <end position="60"/>
    </location>
</feature>
<feature type="region of interest" description="Framework-3">
    <location>
        <begin position="61"/>
        <end position="92"/>
    </location>
</feature>
<feature type="region of interest" description="Complementarity-determining-3">
    <location>
        <begin position="93"/>
        <end position="101"/>
    </location>
</feature>
<feature type="region of interest" description="Framework-4">
    <location>
        <begin position="102"/>
        <end position="111"/>
    </location>
</feature>
<feature type="disulfide bond" evidence="1">
    <location>
        <begin position="23"/>
        <end position="92"/>
    </location>
</feature>
<feature type="non-terminal residue">
    <location>
        <position position="111"/>
    </location>
</feature>
<evidence type="ECO:0000255" key="1">
    <source>
        <dbReference type="PROSITE-ProRule" id="PRU00114"/>
    </source>
</evidence>
<accession>P01657</accession>
<protein>
    <recommendedName>
        <fullName>Ig kappa chain V-III region PC 2413</fullName>
    </recommendedName>
</protein>
<sequence length="111" mass="11949">DIVLTQSPASLAVSLGQRATISCRASESVVNYGVSLMHWFQQKPGQPPKLLIYGASNRGSGVPARFSGSGSGTDFSLIIHPMEEDDSAMYFCHQTKEVPWTFGGGTDLEIE</sequence>
<reference key="1">
    <citation type="journal article" date="1978" name="Nature">
        <title>Rearrangement of genetic information may produce immunoglobulin diversity.</title>
        <authorList>
            <person name="Weigert M."/>
            <person name="Gatmaitan L."/>
            <person name="Loh E."/>
            <person name="Schilling J."/>
            <person name="Hood L.E."/>
        </authorList>
    </citation>
    <scope>PROTEIN SEQUENCE</scope>
</reference>